<name>FAD21_MYCBO</name>
<gene>
    <name type="primary">fadD21</name>
    <name type="ordered locus">BQ2027_MB1217C</name>
</gene>
<proteinExistence type="inferred from homology"/>
<protein>
    <recommendedName>
        <fullName>Putative fatty-acid--CoA ligase fadD21</fullName>
        <ecNumber>6.2.1.-</ecNumber>
    </recommendedName>
    <alternativeName>
        <fullName>Acyl-CoA synthetase</fullName>
    </alternativeName>
</protein>
<accession>P63524</accession>
<accession>A0A1R3XXL4</accession>
<accession>O50441</accession>
<accession>X2BH57</accession>
<dbReference type="EC" id="6.2.1.-"/>
<dbReference type="EMBL" id="LT708304">
    <property type="protein sequence ID" value="SIT99818.1"/>
    <property type="molecule type" value="Genomic_DNA"/>
</dbReference>
<dbReference type="RefSeq" id="NP_854871.1">
    <property type="nucleotide sequence ID" value="NC_002945.3"/>
</dbReference>
<dbReference type="RefSeq" id="WP_003406196.1">
    <property type="nucleotide sequence ID" value="NC_002945.4"/>
</dbReference>
<dbReference type="SMR" id="P63524"/>
<dbReference type="KEGG" id="mbo:BQ2027_MB1217C"/>
<dbReference type="PATRIC" id="fig|233413.5.peg.1336"/>
<dbReference type="Proteomes" id="UP000001419">
    <property type="component" value="Chromosome"/>
</dbReference>
<dbReference type="GO" id="GO:0005886">
    <property type="term" value="C:plasma membrane"/>
    <property type="evidence" value="ECO:0007669"/>
    <property type="project" value="TreeGrafter"/>
</dbReference>
<dbReference type="GO" id="GO:0070566">
    <property type="term" value="F:adenylyltransferase activity"/>
    <property type="evidence" value="ECO:0007669"/>
    <property type="project" value="TreeGrafter"/>
</dbReference>
<dbReference type="GO" id="GO:0016874">
    <property type="term" value="F:ligase activity"/>
    <property type="evidence" value="ECO:0007669"/>
    <property type="project" value="UniProtKB-KW"/>
</dbReference>
<dbReference type="GO" id="GO:0071766">
    <property type="term" value="P:Actinobacterium-type cell wall biogenesis"/>
    <property type="evidence" value="ECO:0007669"/>
    <property type="project" value="UniProtKB-ARBA"/>
</dbReference>
<dbReference type="GO" id="GO:0006633">
    <property type="term" value="P:fatty acid biosynthetic process"/>
    <property type="evidence" value="ECO:0007669"/>
    <property type="project" value="TreeGrafter"/>
</dbReference>
<dbReference type="CDD" id="cd05931">
    <property type="entry name" value="FAAL"/>
    <property type="match status" value="1"/>
</dbReference>
<dbReference type="FunFam" id="3.30.300.30:FF:000016">
    <property type="entry name" value="Fatty-acid-CoA ligase FadD26"/>
    <property type="match status" value="1"/>
</dbReference>
<dbReference type="FunFam" id="3.40.50.12780:FF:000013">
    <property type="entry name" value="Long-chain-fatty-acid--AMP ligase FadD32"/>
    <property type="match status" value="1"/>
</dbReference>
<dbReference type="Gene3D" id="3.30.300.30">
    <property type="match status" value="1"/>
</dbReference>
<dbReference type="Gene3D" id="3.40.50.12780">
    <property type="entry name" value="N-terminal domain of ligase-like"/>
    <property type="match status" value="1"/>
</dbReference>
<dbReference type="InterPro" id="IPR025110">
    <property type="entry name" value="AMP-bd_C"/>
</dbReference>
<dbReference type="InterPro" id="IPR045851">
    <property type="entry name" value="AMP-bd_C_sf"/>
</dbReference>
<dbReference type="InterPro" id="IPR000873">
    <property type="entry name" value="AMP-dep_synth/lig_dom"/>
</dbReference>
<dbReference type="InterPro" id="IPR042099">
    <property type="entry name" value="ANL_N_sf"/>
</dbReference>
<dbReference type="InterPro" id="IPR040097">
    <property type="entry name" value="FAAL/FAAC"/>
</dbReference>
<dbReference type="InterPro" id="IPR054928">
    <property type="entry name" value="FAAL_FadD21"/>
</dbReference>
<dbReference type="NCBIfam" id="NF038337">
    <property type="entry name" value="FAAL_FadD21"/>
    <property type="match status" value="1"/>
</dbReference>
<dbReference type="NCBIfam" id="NF004509">
    <property type="entry name" value="PRK05850.1"/>
    <property type="match status" value="1"/>
</dbReference>
<dbReference type="PANTHER" id="PTHR22754:SF32">
    <property type="entry name" value="DISCO-INTERACTING PROTEIN 2"/>
    <property type="match status" value="1"/>
</dbReference>
<dbReference type="PANTHER" id="PTHR22754">
    <property type="entry name" value="DISCO-INTERACTING PROTEIN 2 DIP2 -RELATED"/>
    <property type="match status" value="1"/>
</dbReference>
<dbReference type="Pfam" id="PF00501">
    <property type="entry name" value="AMP-binding"/>
    <property type="match status" value="1"/>
</dbReference>
<dbReference type="Pfam" id="PF23024">
    <property type="entry name" value="AMP-dom_DIP2-like"/>
    <property type="match status" value="1"/>
</dbReference>
<dbReference type="SUPFAM" id="SSF56801">
    <property type="entry name" value="Acetyl-CoA synthetase-like"/>
    <property type="match status" value="1"/>
</dbReference>
<evidence type="ECO:0000305" key="1"/>
<keyword id="KW-0276">Fatty acid metabolism</keyword>
<keyword id="KW-0436">Ligase</keyword>
<keyword id="KW-0443">Lipid metabolism</keyword>
<keyword id="KW-1185">Reference proteome</keyword>
<feature type="chain" id="PRO_0000193134" description="Putative fatty-acid--CoA ligase fadD21">
    <location>
        <begin position="1"/>
        <end position="578"/>
    </location>
</feature>
<sequence length="578" mass="62757">MSDSSVLSLLRERAGLQPDDAAFTYIDYEQDWAGITETLTWSEVFRRTRIVAHEVRRHCTTGDRAVILAPQGLAYIAAFLGSMQAGAIAVPLSVPQIGSHDERVSAVLADASPSVILTTSAVAEAVAEHIHRPNTNNVGPIIEIDSLDLTGNSPSFRVKDLPSAAYLQYTSGSTRAPAGVMISHRNLQANFQQLMSNYFGDRNGVAPPDTTIVSWLPFYHDMGLVLGIIAPILGGYRSELTSPLAFLQRPARWLHSLANGSPSWSAAPNFAFELAVRKTTDADIEGLDLGNVLGITSGAERVHPNTLSRFCNRFAPYNFREDMIRPSYGLAEATLYVASRNSGDKPEVVYFEPDKLSTGSANRCEPKTGTPLLSYGMPTSPTVRIVDPDTCIECPAGTIGEIWVKGDNVAEGYWNKPDETRHTFGAMLVHPSAGTPDGSWLRTGDLGFLSEDEMFIVGRMKDMLIVYGRNHYPEDIESTVQEITGGRVAAISVPVDHTEKLVTVIELKLLGDSAGEAMDELDVIKNNVTAAISRSHGLNVADLVLVPPGSIPTTTSGKIRRAACVEQYRLQQFTRLDG</sequence>
<organism>
    <name type="scientific">Mycobacterium bovis (strain ATCC BAA-935 / AF2122/97)</name>
    <dbReference type="NCBI Taxonomy" id="233413"/>
    <lineage>
        <taxon>Bacteria</taxon>
        <taxon>Bacillati</taxon>
        <taxon>Actinomycetota</taxon>
        <taxon>Actinomycetes</taxon>
        <taxon>Mycobacteriales</taxon>
        <taxon>Mycobacteriaceae</taxon>
        <taxon>Mycobacterium</taxon>
        <taxon>Mycobacterium tuberculosis complex</taxon>
    </lineage>
</organism>
<reference key="1">
    <citation type="journal article" date="2003" name="Proc. Natl. Acad. Sci. U.S.A.">
        <title>The complete genome sequence of Mycobacterium bovis.</title>
        <authorList>
            <person name="Garnier T."/>
            <person name="Eiglmeier K."/>
            <person name="Camus J.-C."/>
            <person name="Medina N."/>
            <person name="Mansoor H."/>
            <person name="Pryor M."/>
            <person name="Duthoy S."/>
            <person name="Grondin S."/>
            <person name="Lacroix C."/>
            <person name="Monsempe C."/>
            <person name="Simon S."/>
            <person name="Harris B."/>
            <person name="Atkin R."/>
            <person name="Doggett J."/>
            <person name="Mayes R."/>
            <person name="Keating L."/>
            <person name="Wheeler P.R."/>
            <person name="Parkhill J."/>
            <person name="Barrell B.G."/>
            <person name="Cole S.T."/>
            <person name="Gordon S.V."/>
            <person name="Hewinson R.G."/>
        </authorList>
    </citation>
    <scope>NUCLEOTIDE SEQUENCE [LARGE SCALE GENOMIC DNA]</scope>
    <source>
        <strain>ATCC BAA-935 / AF2122/97</strain>
    </source>
</reference>
<reference key="2">
    <citation type="journal article" date="2017" name="Genome Announc.">
        <title>Updated reference genome sequence and annotation of Mycobacterium bovis AF2122/97.</title>
        <authorList>
            <person name="Malone K.M."/>
            <person name="Farrell D."/>
            <person name="Stuber T.P."/>
            <person name="Schubert O.T."/>
            <person name="Aebersold R."/>
            <person name="Robbe-Austerman S."/>
            <person name="Gordon S.V."/>
        </authorList>
    </citation>
    <scope>NUCLEOTIDE SEQUENCE [LARGE SCALE GENOMIC DNA]</scope>
    <scope>GENOME REANNOTATION</scope>
    <source>
        <strain>ATCC BAA-935 / AF2122/97</strain>
    </source>
</reference>
<comment type="similarity">
    <text evidence="1">Belongs to the ATP-dependent AMP-binding enzyme family.</text>
</comment>